<organism>
    <name type="scientific">Escherichia coli O9:H4 (strain HS)</name>
    <dbReference type="NCBI Taxonomy" id="331112"/>
    <lineage>
        <taxon>Bacteria</taxon>
        <taxon>Pseudomonadati</taxon>
        <taxon>Pseudomonadota</taxon>
        <taxon>Gammaproteobacteria</taxon>
        <taxon>Enterobacterales</taxon>
        <taxon>Enterobacteriaceae</taxon>
        <taxon>Escherichia</taxon>
    </lineage>
</organism>
<comment type="function">
    <text evidence="1">Activates the cell division inhibited by chromosomal DNA over-replication.</text>
</comment>
<comment type="similarity">
    <text evidence="1">Belongs to the CedA family.</text>
</comment>
<protein>
    <recommendedName>
        <fullName evidence="1">Cell division activator CedA</fullName>
    </recommendedName>
</protein>
<keyword id="KW-0131">Cell cycle</keyword>
<keyword id="KW-0132">Cell division</keyword>
<keyword id="KW-0238">DNA-binding</keyword>
<dbReference type="EMBL" id="CP000802">
    <property type="protein sequence ID" value="ABV06126.1"/>
    <property type="molecule type" value="Genomic_DNA"/>
</dbReference>
<dbReference type="BMRB" id="A8A0S2"/>
<dbReference type="SMR" id="A8A0S2"/>
<dbReference type="KEGG" id="ecx:EcHS_A1812"/>
<dbReference type="HOGENOM" id="CLU_167445_0_0_6"/>
<dbReference type="GO" id="GO:0003677">
    <property type="term" value="F:DNA binding"/>
    <property type="evidence" value="ECO:0007669"/>
    <property type="project" value="UniProtKB-UniRule"/>
</dbReference>
<dbReference type="GO" id="GO:0051301">
    <property type="term" value="P:cell division"/>
    <property type="evidence" value="ECO:0007669"/>
    <property type="project" value="UniProtKB-UniRule"/>
</dbReference>
<dbReference type="FunFam" id="3.30.730.20:FF:000001">
    <property type="entry name" value="Cell division activator CedA"/>
    <property type="match status" value="1"/>
</dbReference>
<dbReference type="Gene3D" id="3.30.730.20">
    <property type="entry name" value="Cell division activator CedA"/>
    <property type="match status" value="1"/>
</dbReference>
<dbReference type="HAMAP" id="MF_01580">
    <property type="entry name" value="CedA"/>
    <property type="match status" value="1"/>
</dbReference>
<dbReference type="InterPro" id="IPR038463">
    <property type="entry name" value="CedA-like_sf"/>
</dbReference>
<dbReference type="InterPro" id="IPR019666">
    <property type="entry name" value="Cell_div_activator_CedA"/>
</dbReference>
<dbReference type="NCBIfam" id="NF007510">
    <property type="entry name" value="PRK10113.1"/>
    <property type="match status" value="1"/>
</dbReference>
<dbReference type="Pfam" id="PF10729">
    <property type="entry name" value="CedA"/>
    <property type="match status" value="1"/>
</dbReference>
<proteinExistence type="inferred from homology"/>
<reference key="1">
    <citation type="journal article" date="2008" name="J. Bacteriol.">
        <title>The pangenome structure of Escherichia coli: comparative genomic analysis of E. coli commensal and pathogenic isolates.</title>
        <authorList>
            <person name="Rasko D.A."/>
            <person name="Rosovitz M.J."/>
            <person name="Myers G.S.A."/>
            <person name="Mongodin E.F."/>
            <person name="Fricke W.F."/>
            <person name="Gajer P."/>
            <person name="Crabtree J."/>
            <person name="Sebaihia M."/>
            <person name="Thomson N.R."/>
            <person name="Chaudhuri R."/>
            <person name="Henderson I.R."/>
            <person name="Sperandio V."/>
            <person name="Ravel J."/>
        </authorList>
    </citation>
    <scope>NUCLEOTIDE SEQUENCE [LARGE SCALE GENOMIC DNA]</scope>
    <source>
        <strain>HS</strain>
    </source>
</reference>
<sequence length="80" mass="9377">MKKPLRQQNRQIISYVPRTEPAPPEHAIKMDSFRDVWMLRGKYVAFVLMGESFLRSPAFTVPESAQRWANQIRQEGEVTE</sequence>
<accession>A8A0S2</accession>
<name>CEDA_ECOHS</name>
<gene>
    <name evidence="1" type="primary">cedA</name>
    <name type="ordered locus">EcHS_A1812</name>
</gene>
<evidence type="ECO:0000255" key="1">
    <source>
        <dbReference type="HAMAP-Rule" id="MF_01580"/>
    </source>
</evidence>
<feature type="chain" id="PRO_1000069276" description="Cell division activator CedA">
    <location>
        <begin position="1"/>
        <end position="80"/>
    </location>
</feature>